<sequence>MSFIMSSLRNLFLSPLRSFIQKDFHDAFDSMTLLDKLLFMMVHFVDKLILWHRLPVFLGLAYLAARRHLHQEYNLINVGRTPTGVRSNPEDYPYRTADGKYNDPFNEGAGSQFSFFGRNVMPVDQHDKLKKPDPMVVATKLLARKNFMDTGKQFNMIAASWIQFMIHDWIDHLEDTHQIELRAPEEVASECPLKSFKFYKSKKTPTGFYEIKTGYLNRRTSWWDGSAIYGSNTEALKKVRTFEDGKLKLSADGLLEQDENGNIISGDVRNPWAGLLALQALFIQEHNLVCDTLKKEYPKLEDEDLYRHARLVTSAVIAKVHTIDWTVELLKTDTLLAGMRANWYGLLGKKFKDTFGHVGGSSLGGFVGMKKPENHGVPYSLTEEFVSVYRMHQLLPDTLQLRNIDATPGPNKSLPLTNEIPMEDLIGGKGEENLSRIGYTKQMVSMGHQACGALELMNYPIWMRDLIPQDVDGNDRPDHIDLAALEIYRDRERSVARYNEFRRRMLQIPISKWEDLTDDEEAIKMLREVYGDDVEELDLLVGMSAEKKIKGFAISETAFFIFLIMASRRLEADKFFTSNYNEETYTKKGLEWVNTTESLKDVLDRHYPEMTGKWMNSNSAFSVWDSSPEPHNPIPIYFRVPQQ</sequence>
<keyword id="KW-0106">Calcium</keyword>
<keyword id="KW-0223">Dioxygenase</keyword>
<keyword id="KW-0275">Fatty acid biosynthesis</keyword>
<keyword id="KW-0276">Fatty acid metabolism</keyword>
<keyword id="KW-0349">Heme</keyword>
<keyword id="KW-0408">Iron</keyword>
<keyword id="KW-0444">Lipid biosynthesis</keyword>
<keyword id="KW-0443">Lipid metabolism</keyword>
<keyword id="KW-0479">Metal-binding</keyword>
<keyword id="KW-0560">Oxidoreductase</keyword>
<keyword id="KW-0925">Oxylipin biosynthesis</keyword>
<keyword id="KW-0575">Peroxidase</keyword>
<keyword id="KW-0611">Plant defense</keyword>
<keyword id="KW-1185">Reference proteome</keyword>
<organism>
    <name type="scientific">Capsicum annuum</name>
    <name type="common">Capsicum pepper</name>
    <dbReference type="NCBI Taxonomy" id="4072"/>
    <lineage>
        <taxon>Eukaryota</taxon>
        <taxon>Viridiplantae</taxon>
        <taxon>Streptophyta</taxon>
        <taxon>Embryophyta</taxon>
        <taxon>Tracheophyta</taxon>
        <taxon>Spermatophyta</taxon>
        <taxon>Magnoliopsida</taxon>
        <taxon>eudicotyledons</taxon>
        <taxon>Gunneridae</taxon>
        <taxon>Pentapetalae</taxon>
        <taxon>asterids</taxon>
        <taxon>lamiids</taxon>
        <taxon>Solanales</taxon>
        <taxon>Solanaceae</taxon>
        <taxon>Solanoideae</taxon>
        <taxon>Capsiceae</taxon>
        <taxon>Capsicum</taxon>
    </lineage>
</organism>
<gene>
    <name evidence="7" type="ORF">T459_06886</name>
</gene>
<protein>
    <recommendedName>
        <fullName evidence="4">Alpha-dioxygenase 1</fullName>
        <shortName evidence="4">Ca-COX1</shortName>
    </recommendedName>
</protein>
<comment type="function">
    <text evidence="6">Alpha-dioxygenase that catalyzes the primary oxygenation step of a variety of 14-20 carbon fatty acids, containing up to three unsaturated bonds, into their corresponding 2R-hydroperoxides (Probable). Involved in the production of oxylipins that function in cell signaling, wound healing, and protection from infection (Probable). The lipid-derived signaling pathway is involved in the initial response of hot pepper plants to pathogen infection (Probable).</text>
</comment>
<comment type="cofactor">
    <cofactor evidence="1">
        <name>heme b</name>
        <dbReference type="ChEBI" id="CHEBI:60344"/>
    </cofactor>
    <text evidence="1">Binds 1 heme b (iron(II)-protoporphyrin IX) group per subunit.</text>
</comment>
<comment type="cofactor">
    <cofactor evidence="1">
        <name>Ca(2+)</name>
        <dbReference type="ChEBI" id="CHEBI:29108"/>
    </cofactor>
    <text evidence="1">Binds 1 calcium ion per subunit.</text>
</comment>
<comment type="induction">
    <text evidence="3">Induced by infection with the bacterial pathogen Xanthomonas campestris pv glycine 8ra.</text>
</comment>
<comment type="similarity">
    <text evidence="2">Belongs to the peroxidase family.</text>
</comment>
<feature type="chain" id="PRO_0000455384" description="Alpha-dioxygenase 1">
    <location>
        <begin position="1"/>
        <end position="643"/>
    </location>
</feature>
<feature type="active site" description="Proton acceptor" evidence="2">
    <location>
        <position position="167"/>
    </location>
</feature>
<feature type="binding site" evidence="1">
    <location>
        <position position="168"/>
    </location>
    <ligand>
        <name>Ca(2+)</name>
        <dbReference type="ChEBI" id="CHEBI:29108"/>
    </ligand>
</feature>
<feature type="binding site" evidence="1">
    <location>
        <position position="172"/>
    </location>
    <ligand>
        <name>heme b</name>
        <dbReference type="ChEBI" id="CHEBI:60344"/>
    </ligand>
</feature>
<feature type="binding site" evidence="1">
    <location>
        <position position="220"/>
    </location>
    <ligand>
        <name>Ca(2+)</name>
        <dbReference type="ChEBI" id="CHEBI:29108"/>
    </ligand>
</feature>
<feature type="binding site" evidence="1">
    <location>
        <position position="222"/>
    </location>
    <ligand>
        <name>Ca(2+)</name>
        <dbReference type="ChEBI" id="CHEBI:29108"/>
    </ligand>
</feature>
<feature type="binding site" evidence="1">
    <location>
        <position position="224"/>
    </location>
    <ligand>
        <name>Ca(2+)</name>
        <dbReference type="ChEBI" id="CHEBI:29108"/>
    </ligand>
</feature>
<feature type="binding site" evidence="1">
    <location>
        <position position="226"/>
    </location>
    <ligand>
        <name>Ca(2+)</name>
        <dbReference type="ChEBI" id="CHEBI:29108"/>
    </ligand>
</feature>
<feature type="binding site" description="axial binding residue" evidence="2">
    <location>
        <position position="392"/>
    </location>
    <ligand>
        <name>heme b</name>
        <dbReference type="ChEBI" id="CHEBI:60344"/>
    </ligand>
    <ligandPart>
        <name>Fe</name>
        <dbReference type="ChEBI" id="CHEBI:18248"/>
    </ligandPart>
</feature>
<feature type="binding site" evidence="1">
    <location>
        <position position="489"/>
    </location>
    <ligand>
        <name>heme b</name>
        <dbReference type="ChEBI" id="CHEBI:60344"/>
    </ligand>
</feature>
<feature type="binding site" evidence="1">
    <location>
        <position position="493"/>
    </location>
    <ligand>
        <name>heme b</name>
        <dbReference type="ChEBI" id="CHEBI:60344"/>
    </ligand>
</feature>
<feature type="site" description="Transition state stabilizer" evidence="2">
    <location>
        <position position="269"/>
    </location>
</feature>
<feature type="sequence conflict" description="In Ref. 1; AAK85133." evidence="5" ref="1">
    <original>S</original>
    <variation>P</variation>
    <location>
        <position position="221"/>
    </location>
</feature>
<feature type="sequence conflict" description="In Ref. 1; AAK85133." evidence="5" ref="1">
    <original>A</original>
    <variation>S</variation>
    <location>
        <position position="337"/>
    </location>
</feature>
<feature type="sequence conflict" description="In Ref. 1; AAK85133." evidence="5" ref="1">
    <original>DLLVGMSAEKKI</original>
    <variation>EFVSGNVCGEKD</variation>
    <location>
        <begin position="538"/>
        <end position="549"/>
    </location>
</feature>
<evidence type="ECO:0000250" key="1">
    <source>
        <dbReference type="UniProtKB" id="Q9SGH6"/>
    </source>
</evidence>
<evidence type="ECO:0000255" key="2">
    <source>
        <dbReference type="PROSITE-ProRule" id="PRU00298"/>
    </source>
</evidence>
<evidence type="ECO:0000269" key="3">
    <source>
    </source>
</evidence>
<evidence type="ECO:0000303" key="4">
    <source>
    </source>
</evidence>
<evidence type="ECO:0000305" key="5"/>
<evidence type="ECO:0000305" key="6">
    <source>
    </source>
</evidence>
<evidence type="ECO:0000312" key="7">
    <source>
        <dbReference type="EMBL" id="PHT91773.1"/>
    </source>
</evidence>
<dbReference type="EMBL" id="AY040869">
    <property type="protein sequence ID" value="AAK85133.1"/>
    <property type="molecule type" value="mRNA"/>
</dbReference>
<dbReference type="EMBL" id="AYRZ02000002">
    <property type="protein sequence ID" value="PHT91773.1"/>
    <property type="molecule type" value="Genomic_DNA"/>
</dbReference>
<dbReference type="SMR" id="A0A2G3AC72"/>
<dbReference type="PeroxiBase" id="6270">
    <property type="entry name" value="CanDiOx01"/>
</dbReference>
<dbReference type="EnsemblPlants" id="PHT91773">
    <property type="protein sequence ID" value="PHT91773"/>
    <property type="gene ID" value="T459_06886"/>
</dbReference>
<dbReference type="Gramene" id="PHT91773">
    <property type="protein sequence ID" value="PHT91773"/>
    <property type="gene ID" value="T459_06886"/>
</dbReference>
<dbReference type="OMA" id="AFAPWTK"/>
<dbReference type="OrthoDB" id="823504at2759"/>
<dbReference type="Proteomes" id="UP000222542">
    <property type="component" value="Chromosome 2"/>
</dbReference>
<dbReference type="GO" id="GO:0020037">
    <property type="term" value="F:heme binding"/>
    <property type="evidence" value="ECO:0007669"/>
    <property type="project" value="InterPro"/>
</dbReference>
<dbReference type="GO" id="GO:0046872">
    <property type="term" value="F:metal ion binding"/>
    <property type="evidence" value="ECO:0007669"/>
    <property type="project" value="UniProtKB-KW"/>
</dbReference>
<dbReference type="GO" id="GO:0016702">
    <property type="term" value="F:oxidoreductase activity, acting on single donors with incorporation of molecular oxygen, incorporation of two atoms of oxygen"/>
    <property type="evidence" value="ECO:0000318"/>
    <property type="project" value="GO_Central"/>
</dbReference>
<dbReference type="GO" id="GO:0004601">
    <property type="term" value="F:peroxidase activity"/>
    <property type="evidence" value="ECO:0007669"/>
    <property type="project" value="UniProtKB-KW"/>
</dbReference>
<dbReference type="GO" id="GO:0006952">
    <property type="term" value="P:defense response"/>
    <property type="evidence" value="ECO:0007669"/>
    <property type="project" value="UniProtKB-KW"/>
</dbReference>
<dbReference type="GO" id="GO:0006633">
    <property type="term" value="P:fatty acid biosynthetic process"/>
    <property type="evidence" value="ECO:0007669"/>
    <property type="project" value="UniProtKB-KW"/>
</dbReference>
<dbReference type="GO" id="GO:0031408">
    <property type="term" value="P:oxylipin biosynthetic process"/>
    <property type="evidence" value="ECO:0007669"/>
    <property type="project" value="UniProtKB-KW"/>
</dbReference>
<dbReference type="GO" id="GO:0006979">
    <property type="term" value="P:response to oxidative stress"/>
    <property type="evidence" value="ECO:0007669"/>
    <property type="project" value="InterPro"/>
</dbReference>
<dbReference type="CDD" id="cd09818">
    <property type="entry name" value="PIOX_like"/>
    <property type="match status" value="1"/>
</dbReference>
<dbReference type="Gene3D" id="1.10.640.10">
    <property type="entry name" value="Haem peroxidase domain superfamily, animal type"/>
    <property type="match status" value="1"/>
</dbReference>
<dbReference type="InterPro" id="IPR034815">
    <property type="entry name" value="A_dioxygenase"/>
</dbReference>
<dbReference type="InterPro" id="IPR019791">
    <property type="entry name" value="Haem_peroxidase_animal"/>
</dbReference>
<dbReference type="InterPro" id="IPR010255">
    <property type="entry name" value="Haem_peroxidase_sf"/>
</dbReference>
<dbReference type="InterPro" id="IPR037120">
    <property type="entry name" value="Haem_peroxidase_sf_animal"/>
</dbReference>
<dbReference type="InterPro" id="IPR050783">
    <property type="entry name" value="Oxylipin_biosynth_metab"/>
</dbReference>
<dbReference type="PANTHER" id="PTHR11903:SF11">
    <property type="entry name" value="ALPHA-DIOXYGENASE 1"/>
    <property type="match status" value="1"/>
</dbReference>
<dbReference type="PANTHER" id="PTHR11903">
    <property type="entry name" value="PROSTAGLANDIN G/H SYNTHASE"/>
    <property type="match status" value="1"/>
</dbReference>
<dbReference type="Pfam" id="PF03098">
    <property type="entry name" value="An_peroxidase"/>
    <property type="match status" value="1"/>
</dbReference>
<dbReference type="SUPFAM" id="SSF48113">
    <property type="entry name" value="Heme-dependent peroxidases"/>
    <property type="match status" value="1"/>
</dbReference>
<dbReference type="PROSITE" id="PS50292">
    <property type="entry name" value="PEROXIDASE_3"/>
    <property type="match status" value="1"/>
</dbReference>
<reference key="1">
    <citation type="journal article" date="2002" name="J. Exp. Bot.">
        <title>Pathogen-induced expression of cyclo-oxygenase homologue in hot pepper (Capsicum annuum cv. Pukang).</title>
        <authorList>
            <person name="Kim Y.C."/>
            <person name="Yi S.Y."/>
            <person name="Mang H.G."/>
            <person name="Seo Y.S."/>
            <person name="Kim W.T."/>
            <person name="Choi D."/>
        </authorList>
    </citation>
    <scope>NUCLEOTIDE SEQUENCE [MRNA]</scope>
    <scope>FUNCTION</scope>
    <scope>INDUCTION</scope>
    <source>
        <tissue>Leaf</tissue>
    </source>
</reference>
<reference key="2">
    <citation type="journal article" date="2017" name="Genome Biol.">
        <title>New reference genome sequences of hot pepper reveal the massive evolution of plant disease-resistance genes by retroduplication.</title>
        <authorList>
            <person name="Kim S."/>
            <person name="Park J."/>
            <person name="Yeom S.I."/>
            <person name="Kim Y.M."/>
            <person name="Seo E."/>
            <person name="Kim K.T."/>
            <person name="Kim M.S."/>
            <person name="Lee J.M."/>
            <person name="Cheong K."/>
            <person name="Shin H.S."/>
            <person name="Kim S.B."/>
            <person name="Han K."/>
            <person name="Lee J."/>
            <person name="Park M."/>
            <person name="Lee H.A."/>
            <person name="Lee H.Y."/>
            <person name="Lee Y."/>
            <person name="Oh S."/>
            <person name="Lee J.H."/>
            <person name="Choi E."/>
            <person name="Choi E."/>
            <person name="Lee S.E."/>
            <person name="Jeon J."/>
            <person name="Kim H."/>
            <person name="Choi G."/>
            <person name="Song H."/>
            <person name="Lee J."/>
            <person name="Lee S.C."/>
            <person name="Kwon J.K."/>
            <person name="Lee H.Y."/>
            <person name="Koo N."/>
            <person name="Hong Y."/>
            <person name="Kim R.W."/>
            <person name="Kang W.H."/>
            <person name="Huh J.H."/>
            <person name="Kang B.C."/>
            <person name="Yang T.J."/>
            <person name="Lee Y.H."/>
            <person name="Bennetzen J.L."/>
            <person name="Choi D."/>
        </authorList>
    </citation>
    <scope>NUCLEOTIDE SEQUENCE [LARGE SCALE GENOMIC DNA]</scope>
    <source>
        <strain>cv. CM334</strain>
    </source>
</reference>
<accession>A0A2G3AC72</accession>
<accession>Q93X71</accession>
<name>PIOX_CAPAN</name>
<proteinExistence type="evidence at transcript level"/>